<reference key="1">
    <citation type="submission" date="2001-07" db="EMBL/GenBank/DDBJ databases">
        <title>Genome-wide discovery and analysis of human seven transmembrane helix receptor genes.</title>
        <authorList>
            <person name="Suwa M."/>
            <person name="Sato T."/>
            <person name="Okouchi I."/>
            <person name="Arita M."/>
            <person name="Futami K."/>
            <person name="Matsumoto S."/>
            <person name="Tsutsumi S."/>
            <person name="Aburatani H."/>
            <person name="Asai K."/>
            <person name="Akiyama Y."/>
        </authorList>
    </citation>
    <scope>NUCLEOTIDE SEQUENCE [GENOMIC DNA]</scope>
</reference>
<reference key="2">
    <citation type="journal article" date="2004" name="Proc. Natl. Acad. Sci. U.S.A.">
        <title>The human olfactory receptor gene family.</title>
        <authorList>
            <person name="Malnic B."/>
            <person name="Godfrey P.A."/>
            <person name="Buck L.B."/>
        </authorList>
    </citation>
    <scope>IDENTIFICATION</scope>
</reference>
<reference key="3">
    <citation type="journal article" date="2004" name="Proc. Natl. Acad. Sci. U.S.A.">
        <authorList>
            <person name="Malnic B."/>
            <person name="Godfrey P.A."/>
            <person name="Buck L.B."/>
        </authorList>
    </citation>
    <scope>ERRATUM OF PUBMED:14983052</scope>
</reference>
<organism>
    <name type="scientific">Homo sapiens</name>
    <name type="common">Human</name>
    <dbReference type="NCBI Taxonomy" id="9606"/>
    <lineage>
        <taxon>Eukaryota</taxon>
        <taxon>Metazoa</taxon>
        <taxon>Chordata</taxon>
        <taxon>Craniata</taxon>
        <taxon>Vertebrata</taxon>
        <taxon>Euteleostomi</taxon>
        <taxon>Mammalia</taxon>
        <taxon>Eutheria</taxon>
        <taxon>Euarchontoglires</taxon>
        <taxon>Primates</taxon>
        <taxon>Haplorrhini</taxon>
        <taxon>Catarrhini</taxon>
        <taxon>Hominidae</taxon>
        <taxon>Homo</taxon>
    </lineage>
</organism>
<accession>Q8NGN3</accession>
<accession>Q6IEW0</accession>
<gene>
    <name type="primary">OR10G4</name>
</gene>
<protein>
    <recommendedName>
        <fullName>Olfactory receptor 10G4</fullName>
    </recommendedName>
    <alternativeName>
        <fullName>Olfactory receptor OR11-278</fullName>
    </alternativeName>
</protein>
<proteinExistence type="evidence at protein level"/>
<evidence type="ECO:0000255" key="1"/>
<evidence type="ECO:0000255" key="2">
    <source>
        <dbReference type="PROSITE-ProRule" id="PRU00521"/>
    </source>
</evidence>
<evidence type="ECO:0000305" key="3"/>
<sequence length="311" mass="34569">MSNASLVTAFILTGLPHAPGLDALLFGIFLVVYVLTVLGNLLILLVIRVDSHLHTPMYYFLTNLSFIDMWFSTVTVPKMLMTLVSPSGRAISFHSCVAQLYFFHFLGSTECFLYTVMSYDRYLAISYPLRYTSMMSGSRCALLATGTWLSGSLHSAVQTILTFHLPYCGPNQIQHYFCDAPPILKLACADTSANVMVIFVDIGIVASGCFVLIVLSYVSIVCSILRIRTSDGRRRAFQTCASHCIVVLCFFVPCVVIYLRPGSMDAMDGVVAIFYTVLTPLLNPVVYTLRNKEVKKAVLKLRDKVAHPQRK</sequence>
<dbReference type="EMBL" id="AB065757">
    <property type="protein sequence ID" value="BAC05977.1"/>
    <property type="molecule type" value="Genomic_DNA"/>
</dbReference>
<dbReference type="EMBL" id="BK004502">
    <property type="protein sequence ID" value="DAA04900.1"/>
    <property type="molecule type" value="Genomic_DNA"/>
</dbReference>
<dbReference type="CCDS" id="CCDS31702.1"/>
<dbReference type="RefSeq" id="NP_001004462.1">
    <property type="nucleotide sequence ID" value="NM_001004462.2"/>
</dbReference>
<dbReference type="SMR" id="Q8NGN3"/>
<dbReference type="BioGRID" id="133478">
    <property type="interactions" value="7"/>
</dbReference>
<dbReference type="FunCoup" id="Q8NGN3">
    <property type="interactions" value="467"/>
</dbReference>
<dbReference type="IntAct" id="Q8NGN3">
    <property type="interactions" value="2"/>
</dbReference>
<dbReference type="STRING" id="9606.ENSP00000493354"/>
<dbReference type="GlyCosmos" id="Q8NGN3">
    <property type="glycosylation" value="1 site, No reported glycans"/>
</dbReference>
<dbReference type="GlyGen" id="Q8NGN3">
    <property type="glycosylation" value="1 site"/>
</dbReference>
<dbReference type="iPTMnet" id="Q8NGN3"/>
<dbReference type="PhosphoSitePlus" id="Q8NGN3"/>
<dbReference type="BioMuta" id="OR10G4"/>
<dbReference type="DMDM" id="38372733"/>
<dbReference type="PaxDb" id="9606-ENSP00000325076"/>
<dbReference type="PeptideAtlas" id="Q8NGN3"/>
<dbReference type="Antibodypedia" id="56778">
    <property type="antibodies" value="45 antibodies from 15 providers"/>
</dbReference>
<dbReference type="DNASU" id="390264"/>
<dbReference type="Ensembl" id="ENST00000641521.1">
    <property type="protein sequence ID" value="ENSP00000493354.1"/>
    <property type="gene ID" value="ENSG00000254737.3"/>
</dbReference>
<dbReference type="Ensembl" id="ENST00000641722.1">
    <property type="protein sequence ID" value="ENSP00000493036.1"/>
    <property type="gene ID" value="ENSG00000254737.3"/>
</dbReference>
<dbReference type="GeneID" id="390264"/>
<dbReference type="KEGG" id="hsa:390264"/>
<dbReference type="MANE-Select" id="ENST00000641722.1">
    <property type="protein sequence ID" value="ENSP00000493036.1"/>
    <property type="RefSeq nucleotide sequence ID" value="NM_001004462.2"/>
    <property type="RefSeq protein sequence ID" value="NP_001004462.1"/>
</dbReference>
<dbReference type="UCSC" id="uc010sac.2">
    <property type="organism name" value="human"/>
</dbReference>
<dbReference type="AGR" id="HGNC:14809"/>
<dbReference type="CTD" id="390264"/>
<dbReference type="GeneCards" id="OR10G4"/>
<dbReference type="HGNC" id="HGNC:14809">
    <property type="gene designation" value="OR10G4"/>
</dbReference>
<dbReference type="HPA" id="ENSG00000254737">
    <property type="expression patterns" value="Not detected"/>
</dbReference>
<dbReference type="neXtProt" id="NX_Q8NGN3"/>
<dbReference type="OpenTargets" id="ENSG00000254737"/>
<dbReference type="PharmGKB" id="PA31971"/>
<dbReference type="VEuPathDB" id="HostDB:ENSG00000254737"/>
<dbReference type="eggNOG" id="ENOG502SI4A">
    <property type="taxonomic scope" value="Eukaryota"/>
</dbReference>
<dbReference type="GeneTree" id="ENSGT01050000244869"/>
<dbReference type="HOGENOM" id="CLU_012526_8_1_1"/>
<dbReference type="InParanoid" id="Q8NGN3"/>
<dbReference type="OMA" id="CIHRANN"/>
<dbReference type="OrthoDB" id="9045771at2759"/>
<dbReference type="PAN-GO" id="Q8NGN3">
    <property type="GO annotations" value="1 GO annotation based on evolutionary models"/>
</dbReference>
<dbReference type="PhylomeDB" id="Q8NGN3"/>
<dbReference type="TreeFam" id="TF337251"/>
<dbReference type="PathwayCommons" id="Q8NGN3"/>
<dbReference type="Reactome" id="R-HSA-381753">
    <property type="pathway name" value="Olfactory Signaling Pathway"/>
</dbReference>
<dbReference type="Reactome" id="R-HSA-9752946">
    <property type="pathway name" value="Expression and translocation of olfactory receptors"/>
</dbReference>
<dbReference type="BioGRID-ORCS" id="390264">
    <property type="hits" value="12 hits in 703 CRISPR screens"/>
</dbReference>
<dbReference type="GeneWiki" id="OR10G4"/>
<dbReference type="GenomeRNAi" id="390264"/>
<dbReference type="Pharos" id="Q8NGN3">
    <property type="development level" value="Tdark"/>
</dbReference>
<dbReference type="PRO" id="PR:Q8NGN3"/>
<dbReference type="Proteomes" id="UP000005640">
    <property type="component" value="Chromosome 11"/>
</dbReference>
<dbReference type="RNAct" id="Q8NGN3">
    <property type="molecule type" value="protein"/>
</dbReference>
<dbReference type="Bgee" id="ENSG00000254737">
    <property type="expression patterns" value="Expressed in male germ line stem cell (sensu Vertebrata) in testis and 4 other cell types or tissues"/>
</dbReference>
<dbReference type="ExpressionAtlas" id="Q8NGN3">
    <property type="expression patterns" value="baseline and differential"/>
</dbReference>
<dbReference type="GO" id="GO:0005886">
    <property type="term" value="C:plasma membrane"/>
    <property type="evidence" value="ECO:0000318"/>
    <property type="project" value="GO_Central"/>
</dbReference>
<dbReference type="GO" id="GO:0004930">
    <property type="term" value="F:G protein-coupled receptor activity"/>
    <property type="evidence" value="ECO:0007669"/>
    <property type="project" value="UniProtKB-KW"/>
</dbReference>
<dbReference type="GO" id="GO:0004984">
    <property type="term" value="F:olfactory receptor activity"/>
    <property type="evidence" value="ECO:0000318"/>
    <property type="project" value="GO_Central"/>
</dbReference>
<dbReference type="GO" id="GO:0050911">
    <property type="term" value="P:detection of chemical stimulus involved in sensory perception of smell"/>
    <property type="evidence" value="ECO:0000318"/>
    <property type="project" value="GO_Central"/>
</dbReference>
<dbReference type="CDD" id="cd15916">
    <property type="entry name" value="7tmA_OR10G-like"/>
    <property type="match status" value="1"/>
</dbReference>
<dbReference type="FunFam" id="1.20.1070.10:FF:000001">
    <property type="entry name" value="Olfactory receptor"/>
    <property type="match status" value="1"/>
</dbReference>
<dbReference type="Gene3D" id="1.20.1070.10">
    <property type="entry name" value="Rhodopsin 7-helix transmembrane proteins"/>
    <property type="match status" value="1"/>
</dbReference>
<dbReference type="InterPro" id="IPR000276">
    <property type="entry name" value="GPCR_Rhodpsn"/>
</dbReference>
<dbReference type="InterPro" id="IPR017452">
    <property type="entry name" value="GPCR_Rhodpsn_7TM"/>
</dbReference>
<dbReference type="InterPro" id="IPR000725">
    <property type="entry name" value="Olfact_rcpt"/>
</dbReference>
<dbReference type="PANTHER" id="PTHR26453">
    <property type="entry name" value="OLFACTORY RECEPTOR"/>
    <property type="match status" value="1"/>
</dbReference>
<dbReference type="Pfam" id="PF13853">
    <property type="entry name" value="7tm_4"/>
    <property type="match status" value="1"/>
</dbReference>
<dbReference type="PRINTS" id="PR00237">
    <property type="entry name" value="GPCRRHODOPSN"/>
</dbReference>
<dbReference type="PRINTS" id="PR00245">
    <property type="entry name" value="OLFACTORYR"/>
</dbReference>
<dbReference type="SUPFAM" id="SSF81321">
    <property type="entry name" value="Family A G protein-coupled receptor-like"/>
    <property type="match status" value="1"/>
</dbReference>
<dbReference type="PROSITE" id="PS50262">
    <property type="entry name" value="G_PROTEIN_RECEP_F1_2"/>
    <property type="match status" value="1"/>
</dbReference>
<comment type="function">
    <text evidence="3">Odorant receptor.</text>
</comment>
<comment type="interaction">
    <interactant intactId="EBI-17208485">
        <id>Q8NGN3</id>
    </interactant>
    <interactant intactId="EBI-18325557">
        <id>Q86XA6</id>
        <label>B4GALT1</label>
    </interactant>
    <organismsDiffer>false</organismsDiffer>
    <experiments>3</experiments>
</comment>
<comment type="interaction">
    <interactant intactId="EBI-17208485">
        <id>Q8NGN3</id>
    </interactant>
    <interactant intactId="EBI-17208508">
        <id>P30050-2</id>
        <label>RPL12</label>
    </interactant>
    <organismsDiffer>false</organismsDiffer>
    <experiments>3</experiments>
</comment>
<comment type="subcellular location">
    <subcellularLocation>
        <location>Cell membrane</location>
        <topology>Multi-pass membrane protein</topology>
    </subcellularLocation>
</comment>
<comment type="similarity">
    <text evidence="2">Belongs to the G-protein coupled receptor 1 family.</text>
</comment>
<comment type="online information" name="Human Olfactory Receptor Data Exploratorium (HORDE)">
    <link uri="http://genome.weizmann.ac.il/horde/card/index/symbol:OR10G4"/>
</comment>
<feature type="chain" id="PRO_0000150697" description="Olfactory receptor 10G4">
    <location>
        <begin position="1"/>
        <end position="311"/>
    </location>
</feature>
<feature type="topological domain" description="Extracellular" evidence="1">
    <location>
        <begin position="1"/>
        <end position="23"/>
    </location>
</feature>
<feature type="transmembrane region" description="Helical; Name=1" evidence="1">
    <location>
        <begin position="24"/>
        <end position="44"/>
    </location>
</feature>
<feature type="topological domain" description="Cytoplasmic" evidence="1">
    <location>
        <begin position="45"/>
        <end position="52"/>
    </location>
</feature>
<feature type="transmembrane region" description="Helical; Name=2" evidence="1">
    <location>
        <begin position="53"/>
        <end position="73"/>
    </location>
</feature>
<feature type="topological domain" description="Extracellular" evidence="1">
    <location>
        <begin position="74"/>
        <end position="98"/>
    </location>
</feature>
<feature type="transmembrane region" description="Helical; Name=3" evidence="1">
    <location>
        <begin position="99"/>
        <end position="119"/>
    </location>
</feature>
<feature type="topological domain" description="Cytoplasmic" evidence="1">
    <location>
        <begin position="120"/>
        <end position="138"/>
    </location>
</feature>
<feature type="transmembrane region" description="Helical; Name=4" evidence="1">
    <location>
        <begin position="139"/>
        <end position="159"/>
    </location>
</feature>
<feature type="topological domain" description="Extracellular" evidence="1">
    <location>
        <begin position="160"/>
        <end position="196"/>
    </location>
</feature>
<feature type="transmembrane region" description="Helical; Name=5" evidence="1">
    <location>
        <begin position="197"/>
        <end position="216"/>
    </location>
</feature>
<feature type="topological domain" description="Cytoplasmic" evidence="1">
    <location>
        <begin position="217"/>
        <end position="236"/>
    </location>
</feature>
<feature type="transmembrane region" description="Helical; Name=6" evidence="1">
    <location>
        <begin position="237"/>
        <end position="257"/>
    </location>
</feature>
<feature type="topological domain" description="Extracellular" evidence="1">
    <location>
        <begin position="258"/>
        <end position="268"/>
    </location>
</feature>
<feature type="transmembrane region" description="Helical; Name=7" evidence="1">
    <location>
        <begin position="269"/>
        <end position="289"/>
    </location>
</feature>
<feature type="topological domain" description="Cytoplasmic" evidence="1">
    <location>
        <begin position="290"/>
        <end position="311"/>
    </location>
</feature>
<feature type="glycosylation site" description="N-linked (GlcNAc...) asparagine" evidence="1">
    <location>
        <position position="3"/>
    </location>
</feature>
<feature type="disulfide bond" evidence="2">
    <location>
        <begin position="96"/>
        <end position="188"/>
    </location>
</feature>
<feature type="sequence variant" id="VAR_053275" description="In dbSNP:rs547068.">
    <original>L</original>
    <variation>P</variation>
    <location>
        <position position="24"/>
    </location>
</feature>
<feature type="sequence variant" id="VAR_060025" description="In dbSNP:rs4474449.">
    <original>Y</original>
    <variation>C</variation>
    <location>
        <position position="101"/>
    </location>
</feature>
<feature type="sequence variant" id="VAR_053276" description="In dbSNP:rs1893766.">
    <original>M</original>
    <variation>V</variation>
    <location>
        <position position="134"/>
    </location>
</feature>
<feature type="sequence variant" id="VAR_060026" description="In dbSNP:rs503223.">
    <original>G</original>
    <variation>C</variation>
    <location>
        <position position="146"/>
    </location>
</feature>
<feature type="sequence variant" id="VAR_060027" description="In dbSNP:rs503223.">
    <original>G</original>
    <variation>R</variation>
    <location>
        <position position="146"/>
    </location>
</feature>
<feature type="sequence variant" id="VAR_060028" description="In dbSNP:rs503223.">
    <original>G</original>
    <variation>S</variation>
    <location>
        <position position="146"/>
    </location>
</feature>
<feature type="sequence variant" id="VAR_053277" description="In dbSNP:rs1893764.">
    <original>P</original>
    <variation>S</variation>
    <location>
        <position position="181"/>
    </location>
</feature>
<feature type="sequence variant" id="VAR_034283" description="In dbSNP:rs4084209.">
    <original>V</original>
    <variation>E</variation>
    <location>
        <position position="195"/>
    </location>
</feature>
<feature type="sequence variant" id="VAR_053278" description="In dbSNP:rs11219408.">
    <original>R</original>
    <variation>Q</variation>
    <location>
        <position position="226"/>
    </location>
</feature>
<feature type="sequence variant" id="VAR_034284" description="In dbSNP:rs4936880.">
    <original>R</original>
    <variation>G</variation>
    <location>
        <position position="235"/>
    </location>
</feature>
<feature type="sequence variant" id="VAR_053279" description="In dbSNP:rs4936881.">
    <original>K</original>
    <variation>Q</variation>
    <location>
        <position position="295"/>
    </location>
</feature>
<name>O10G4_HUMAN</name>
<keyword id="KW-1003">Cell membrane</keyword>
<keyword id="KW-1015">Disulfide bond</keyword>
<keyword id="KW-0297">G-protein coupled receptor</keyword>
<keyword id="KW-0325">Glycoprotein</keyword>
<keyword id="KW-0472">Membrane</keyword>
<keyword id="KW-0552">Olfaction</keyword>
<keyword id="KW-0675">Receptor</keyword>
<keyword id="KW-1185">Reference proteome</keyword>
<keyword id="KW-0716">Sensory transduction</keyword>
<keyword id="KW-0807">Transducer</keyword>
<keyword id="KW-0812">Transmembrane</keyword>
<keyword id="KW-1133">Transmembrane helix</keyword>